<keyword id="KW-0030">Aminoacyl-tRNA synthetase</keyword>
<keyword id="KW-0067">ATP-binding</keyword>
<keyword id="KW-0963">Cytoplasm</keyword>
<keyword id="KW-0436">Ligase</keyword>
<keyword id="KW-0460">Magnesium</keyword>
<keyword id="KW-0479">Metal-binding</keyword>
<keyword id="KW-0547">Nucleotide-binding</keyword>
<keyword id="KW-0648">Protein biosynthesis</keyword>
<keyword id="KW-1185">Reference proteome</keyword>
<name>SYK_ALIB4</name>
<evidence type="ECO:0000255" key="1">
    <source>
        <dbReference type="HAMAP-Rule" id="MF_00252"/>
    </source>
</evidence>
<accession>A8ESJ5</accession>
<feature type="chain" id="PRO_1000059039" description="Lysine--tRNA ligase">
    <location>
        <begin position="1"/>
        <end position="504"/>
    </location>
</feature>
<feature type="binding site" evidence="1">
    <location>
        <position position="404"/>
    </location>
    <ligand>
        <name>Mg(2+)</name>
        <dbReference type="ChEBI" id="CHEBI:18420"/>
        <label>1</label>
    </ligand>
</feature>
<feature type="binding site" evidence="1">
    <location>
        <position position="411"/>
    </location>
    <ligand>
        <name>Mg(2+)</name>
        <dbReference type="ChEBI" id="CHEBI:18420"/>
        <label>1</label>
    </ligand>
</feature>
<feature type="binding site" evidence="1">
    <location>
        <position position="411"/>
    </location>
    <ligand>
        <name>Mg(2+)</name>
        <dbReference type="ChEBI" id="CHEBI:18420"/>
        <label>2</label>
    </ligand>
</feature>
<comment type="catalytic activity">
    <reaction evidence="1">
        <text>tRNA(Lys) + L-lysine + ATP = L-lysyl-tRNA(Lys) + AMP + diphosphate</text>
        <dbReference type="Rhea" id="RHEA:20792"/>
        <dbReference type="Rhea" id="RHEA-COMP:9696"/>
        <dbReference type="Rhea" id="RHEA-COMP:9697"/>
        <dbReference type="ChEBI" id="CHEBI:30616"/>
        <dbReference type="ChEBI" id="CHEBI:32551"/>
        <dbReference type="ChEBI" id="CHEBI:33019"/>
        <dbReference type="ChEBI" id="CHEBI:78442"/>
        <dbReference type="ChEBI" id="CHEBI:78529"/>
        <dbReference type="ChEBI" id="CHEBI:456215"/>
        <dbReference type="EC" id="6.1.1.6"/>
    </reaction>
</comment>
<comment type="cofactor">
    <cofactor evidence="1">
        <name>Mg(2+)</name>
        <dbReference type="ChEBI" id="CHEBI:18420"/>
    </cofactor>
    <text evidence="1">Binds 3 Mg(2+) ions per subunit.</text>
</comment>
<comment type="subunit">
    <text evidence="1">Homodimer.</text>
</comment>
<comment type="subcellular location">
    <subcellularLocation>
        <location evidence="1">Cytoplasm</location>
    </subcellularLocation>
</comment>
<comment type="similarity">
    <text evidence="1">Belongs to the class-II aminoacyl-tRNA synthetase family.</text>
</comment>
<sequence>MFENIYIQQRIEKANKLREDGINPYSNESSRNCTISKYLNVNSDIFQLEEKRDENRNYTVAGRIKFFRLMGKASFLKIEDESGMLQIYVARDNLPENFYNEVFKKNIEVGDIIEISGYPFVTGHGELSLHADSLKILTKAISPLPEKFHGIQDKELRYRQRYLDLIMNSEVRKTFHIRSKVISLTRRFFENKGFLEVETPMMHPIAGGANAKPFVTHFNALGVDRFLRIAPELYLKRLIVGGFEAVFEINRNFRNEGMDATHNPEFTSIEFYWAYKTYKDLIVLTKEYFEYLFENLNLPTILPYGEFKIDFNKFSEIPLIQSLYEIGGVPQDIVEDKDKILAFLKANNLEANANLNLGQLQGELFDEFVEAKLINPTFITEYPVEISPLARRSDEKPHLTDRFELFIAGKEIANAFSELNDPIDQLQRFEGQIAAKEAGDDEAHEMDEDFVNALSYGMAPTAGQGIGIDRLVMMLTNEHSIRDVLLFPAMKPIKQEIDLYSEEK</sequence>
<protein>
    <recommendedName>
        <fullName evidence="1">Lysine--tRNA ligase</fullName>
        <ecNumber evidence="1">6.1.1.6</ecNumber>
    </recommendedName>
    <alternativeName>
        <fullName evidence="1">Lysyl-tRNA synthetase</fullName>
        <shortName evidence="1">LysRS</shortName>
    </alternativeName>
</protein>
<reference key="1">
    <citation type="journal article" date="2007" name="PLoS ONE">
        <title>The complete genome sequence and analysis of the Epsilonproteobacterium Arcobacter butzleri.</title>
        <authorList>
            <person name="Miller W.G."/>
            <person name="Parker C.T."/>
            <person name="Rubenfield M."/>
            <person name="Mendz G.L."/>
            <person name="Woesten M.M.S.M."/>
            <person name="Ussery D.W."/>
            <person name="Stolz J.F."/>
            <person name="Binnewies T.T."/>
            <person name="Hallin P.F."/>
            <person name="Wang G."/>
            <person name="Malek J.A."/>
            <person name="Rogosin A."/>
            <person name="Stanker L.H."/>
            <person name="Mandrell R.E."/>
        </authorList>
    </citation>
    <scope>NUCLEOTIDE SEQUENCE [LARGE SCALE GENOMIC DNA]</scope>
    <source>
        <strain>RM4018</strain>
    </source>
</reference>
<dbReference type="EC" id="6.1.1.6" evidence="1"/>
<dbReference type="EMBL" id="CP000361">
    <property type="protein sequence ID" value="ABV66919.1"/>
    <property type="molecule type" value="Genomic_DNA"/>
</dbReference>
<dbReference type="RefSeq" id="WP_012012425.1">
    <property type="nucleotide sequence ID" value="NC_009850.1"/>
</dbReference>
<dbReference type="SMR" id="A8ESJ5"/>
<dbReference type="STRING" id="367737.Abu_0654"/>
<dbReference type="GeneID" id="24304222"/>
<dbReference type="KEGG" id="abu:Abu_0654"/>
<dbReference type="eggNOG" id="COG1190">
    <property type="taxonomic scope" value="Bacteria"/>
</dbReference>
<dbReference type="HOGENOM" id="CLU_008255_6_0_7"/>
<dbReference type="Proteomes" id="UP000001136">
    <property type="component" value="Chromosome"/>
</dbReference>
<dbReference type="GO" id="GO:0005829">
    <property type="term" value="C:cytosol"/>
    <property type="evidence" value="ECO:0007669"/>
    <property type="project" value="TreeGrafter"/>
</dbReference>
<dbReference type="GO" id="GO:0005524">
    <property type="term" value="F:ATP binding"/>
    <property type="evidence" value="ECO:0007669"/>
    <property type="project" value="UniProtKB-UniRule"/>
</dbReference>
<dbReference type="GO" id="GO:0004824">
    <property type="term" value="F:lysine-tRNA ligase activity"/>
    <property type="evidence" value="ECO:0007669"/>
    <property type="project" value="UniProtKB-UniRule"/>
</dbReference>
<dbReference type="GO" id="GO:0000287">
    <property type="term" value="F:magnesium ion binding"/>
    <property type="evidence" value="ECO:0007669"/>
    <property type="project" value="UniProtKB-UniRule"/>
</dbReference>
<dbReference type="GO" id="GO:0000049">
    <property type="term" value="F:tRNA binding"/>
    <property type="evidence" value="ECO:0007669"/>
    <property type="project" value="TreeGrafter"/>
</dbReference>
<dbReference type="GO" id="GO:0006430">
    <property type="term" value="P:lysyl-tRNA aminoacylation"/>
    <property type="evidence" value="ECO:0007669"/>
    <property type="project" value="UniProtKB-UniRule"/>
</dbReference>
<dbReference type="CDD" id="cd00775">
    <property type="entry name" value="LysRS_core"/>
    <property type="match status" value="1"/>
</dbReference>
<dbReference type="CDD" id="cd04322">
    <property type="entry name" value="LysRS_N"/>
    <property type="match status" value="1"/>
</dbReference>
<dbReference type="FunFam" id="2.40.50.140:FF:000024">
    <property type="entry name" value="Lysine--tRNA ligase"/>
    <property type="match status" value="1"/>
</dbReference>
<dbReference type="Gene3D" id="3.30.930.10">
    <property type="entry name" value="Bira Bifunctional Protein, Domain 2"/>
    <property type="match status" value="1"/>
</dbReference>
<dbReference type="Gene3D" id="2.40.50.140">
    <property type="entry name" value="Nucleic acid-binding proteins"/>
    <property type="match status" value="1"/>
</dbReference>
<dbReference type="HAMAP" id="MF_00252">
    <property type="entry name" value="Lys_tRNA_synth_class2"/>
    <property type="match status" value="1"/>
</dbReference>
<dbReference type="InterPro" id="IPR004364">
    <property type="entry name" value="Aa-tRNA-synt_II"/>
</dbReference>
<dbReference type="InterPro" id="IPR006195">
    <property type="entry name" value="aa-tRNA-synth_II"/>
</dbReference>
<dbReference type="InterPro" id="IPR045864">
    <property type="entry name" value="aa-tRNA-synth_II/BPL/LPL"/>
</dbReference>
<dbReference type="InterPro" id="IPR002313">
    <property type="entry name" value="Lys-tRNA-ligase_II"/>
</dbReference>
<dbReference type="InterPro" id="IPR044136">
    <property type="entry name" value="Lys-tRNA-ligase_II_N"/>
</dbReference>
<dbReference type="InterPro" id="IPR018149">
    <property type="entry name" value="Lys-tRNA-synth_II_C"/>
</dbReference>
<dbReference type="InterPro" id="IPR012340">
    <property type="entry name" value="NA-bd_OB-fold"/>
</dbReference>
<dbReference type="InterPro" id="IPR004365">
    <property type="entry name" value="NA-bd_OB_tRNA"/>
</dbReference>
<dbReference type="NCBIfam" id="TIGR00499">
    <property type="entry name" value="lysS_bact"/>
    <property type="match status" value="1"/>
</dbReference>
<dbReference type="NCBIfam" id="NF001756">
    <property type="entry name" value="PRK00484.1"/>
    <property type="match status" value="1"/>
</dbReference>
<dbReference type="PANTHER" id="PTHR42918:SF15">
    <property type="entry name" value="LYSINE--TRNA LIGASE, CHLOROPLASTIC_MITOCHONDRIAL"/>
    <property type="match status" value="1"/>
</dbReference>
<dbReference type="PANTHER" id="PTHR42918">
    <property type="entry name" value="LYSYL-TRNA SYNTHETASE"/>
    <property type="match status" value="1"/>
</dbReference>
<dbReference type="Pfam" id="PF00152">
    <property type="entry name" value="tRNA-synt_2"/>
    <property type="match status" value="1"/>
</dbReference>
<dbReference type="Pfam" id="PF01336">
    <property type="entry name" value="tRNA_anti-codon"/>
    <property type="match status" value="1"/>
</dbReference>
<dbReference type="PRINTS" id="PR00982">
    <property type="entry name" value="TRNASYNTHLYS"/>
</dbReference>
<dbReference type="SUPFAM" id="SSF55681">
    <property type="entry name" value="Class II aaRS and biotin synthetases"/>
    <property type="match status" value="1"/>
</dbReference>
<dbReference type="SUPFAM" id="SSF50249">
    <property type="entry name" value="Nucleic acid-binding proteins"/>
    <property type="match status" value="1"/>
</dbReference>
<dbReference type="PROSITE" id="PS50862">
    <property type="entry name" value="AA_TRNA_LIGASE_II"/>
    <property type="match status" value="1"/>
</dbReference>
<proteinExistence type="inferred from homology"/>
<organism>
    <name type="scientific">Aliarcobacter butzleri (strain RM4018)</name>
    <name type="common">Arcobacter butzleri</name>
    <dbReference type="NCBI Taxonomy" id="367737"/>
    <lineage>
        <taxon>Bacteria</taxon>
        <taxon>Pseudomonadati</taxon>
        <taxon>Campylobacterota</taxon>
        <taxon>Epsilonproteobacteria</taxon>
        <taxon>Campylobacterales</taxon>
        <taxon>Arcobacteraceae</taxon>
        <taxon>Aliarcobacter</taxon>
    </lineage>
</organism>
<gene>
    <name evidence="1" type="primary">lysS</name>
    <name type="ordered locus">Abu_0654</name>
</gene>